<comment type="subcellular location">
    <subcellularLocation>
        <location evidence="3">Secreted</location>
    </subcellularLocation>
</comment>
<comment type="similarity">
    <text evidence="3">Belongs to the cysteine-rich repeat secretory protein family.</text>
</comment>
<name>CRR19_ARATH</name>
<gene>
    <name type="primary">CRRSP19</name>
    <name type="ordered locus">At3g21930</name>
    <name type="ORF">MZN24.5</name>
</gene>
<dbReference type="EMBL" id="AB028622">
    <property type="protein sequence ID" value="BAB01370.1"/>
    <property type="molecule type" value="Genomic_DNA"/>
</dbReference>
<dbReference type="EMBL" id="CP002686">
    <property type="protein sequence ID" value="AEE76567.2"/>
    <property type="molecule type" value="Genomic_DNA"/>
</dbReference>
<dbReference type="RefSeq" id="NP_188831.2">
    <property type="nucleotide sequence ID" value="NM_113089.2"/>
</dbReference>
<dbReference type="SMR" id="Q9LRM0"/>
<dbReference type="STRING" id="3702.Q9LRM0"/>
<dbReference type="PaxDb" id="3702-AT3G21930.1"/>
<dbReference type="ProteomicsDB" id="222731"/>
<dbReference type="EnsemblPlants" id="AT3G21930.1">
    <property type="protein sequence ID" value="AT3G21930.1"/>
    <property type="gene ID" value="AT3G21930"/>
</dbReference>
<dbReference type="GeneID" id="821748"/>
<dbReference type="Gramene" id="AT3G21930.1">
    <property type="protein sequence ID" value="AT3G21930.1"/>
    <property type="gene ID" value="AT3G21930"/>
</dbReference>
<dbReference type="KEGG" id="ath:AT3G21930"/>
<dbReference type="Araport" id="AT3G21930"/>
<dbReference type="TAIR" id="AT3G21930"/>
<dbReference type="eggNOG" id="ENOG502QPWH">
    <property type="taxonomic scope" value="Eukaryota"/>
</dbReference>
<dbReference type="HOGENOM" id="CLU_000288_35_0_1"/>
<dbReference type="InParanoid" id="Q9LRM0"/>
<dbReference type="OMA" id="QECWESK"/>
<dbReference type="PhylomeDB" id="Q9LRM0"/>
<dbReference type="PRO" id="PR:Q9LRM0"/>
<dbReference type="Proteomes" id="UP000006548">
    <property type="component" value="Chromosome 3"/>
</dbReference>
<dbReference type="ExpressionAtlas" id="Q9LRM0">
    <property type="expression patterns" value="baseline"/>
</dbReference>
<dbReference type="GO" id="GO:0005576">
    <property type="term" value="C:extracellular region"/>
    <property type="evidence" value="ECO:0007669"/>
    <property type="project" value="UniProtKB-SubCell"/>
</dbReference>
<dbReference type="CDD" id="cd23509">
    <property type="entry name" value="Gnk2-like"/>
    <property type="match status" value="2"/>
</dbReference>
<dbReference type="Gene3D" id="3.30.430.20">
    <property type="entry name" value="Gnk2 domain, C-X8-C-X2-C motif"/>
    <property type="match status" value="2"/>
</dbReference>
<dbReference type="InterPro" id="IPR050581">
    <property type="entry name" value="CRR_secretory_protein"/>
</dbReference>
<dbReference type="InterPro" id="IPR002902">
    <property type="entry name" value="GNK2"/>
</dbReference>
<dbReference type="InterPro" id="IPR038408">
    <property type="entry name" value="GNK2_sf"/>
</dbReference>
<dbReference type="PANTHER" id="PTHR32411:SF53">
    <property type="entry name" value="CYSTEINE-RICH REPEAT SECRETORY PROTEIN 18-RELATED"/>
    <property type="match status" value="1"/>
</dbReference>
<dbReference type="PANTHER" id="PTHR32411">
    <property type="entry name" value="CYSTEINE-RICH REPEAT SECRETORY PROTEIN 38-RELATED"/>
    <property type="match status" value="1"/>
</dbReference>
<dbReference type="Pfam" id="PF01657">
    <property type="entry name" value="Stress-antifung"/>
    <property type="match status" value="2"/>
</dbReference>
<dbReference type="PROSITE" id="PS51473">
    <property type="entry name" value="GNK2"/>
    <property type="match status" value="2"/>
</dbReference>
<evidence type="ECO:0000255" key="1"/>
<evidence type="ECO:0000255" key="2">
    <source>
        <dbReference type="PROSITE-ProRule" id="PRU00806"/>
    </source>
</evidence>
<evidence type="ECO:0000305" key="3"/>
<protein>
    <recommendedName>
        <fullName>Putative cysteine-rich repeat secretory protein 19</fullName>
    </recommendedName>
</protein>
<sequence length="278" mass="31713">MYSSSSVSKRFVLVPIVVVVTTQLLLVRNVSSLNLTNSYLHHKCVVNQGKYKPGSKYEKSLDDIIQSFSNKDKDSYGFRTGYSMKAYGKEPDMVSITYQCRIDSRGPKCQSCVVTAGYELLRKRCPRYKEAIIWYDQCLVEFSSLDTSGQINYDDNFCMPSAKNLIGNSISLEERLHLLNNLTKIAVTKIDKNIEGIKKPVLYAAGEKRLGTKSLYGMVQCSADLSVQGCNECMLYYIVHFQECWESKQGVRVLSRSCNFRYELYPFISPKGSYYTKF</sequence>
<organism>
    <name type="scientific">Arabidopsis thaliana</name>
    <name type="common">Mouse-ear cress</name>
    <dbReference type="NCBI Taxonomy" id="3702"/>
    <lineage>
        <taxon>Eukaryota</taxon>
        <taxon>Viridiplantae</taxon>
        <taxon>Streptophyta</taxon>
        <taxon>Embryophyta</taxon>
        <taxon>Tracheophyta</taxon>
        <taxon>Spermatophyta</taxon>
        <taxon>Magnoliopsida</taxon>
        <taxon>eudicotyledons</taxon>
        <taxon>Gunneridae</taxon>
        <taxon>Pentapetalae</taxon>
        <taxon>rosids</taxon>
        <taxon>malvids</taxon>
        <taxon>Brassicales</taxon>
        <taxon>Brassicaceae</taxon>
        <taxon>Camelineae</taxon>
        <taxon>Arabidopsis</taxon>
    </lineage>
</organism>
<feature type="signal peptide" evidence="1">
    <location>
        <begin position="1"/>
        <end position="32"/>
    </location>
</feature>
<feature type="chain" id="PRO_0000296147" description="Putative cysteine-rich repeat secretory protein 19">
    <location>
        <begin position="33"/>
        <end position="278"/>
    </location>
</feature>
<feature type="domain" description="Gnk2-homologous 1" evidence="2">
    <location>
        <begin position="39"/>
        <end position="147"/>
    </location>
</feature>
<feature type="domain" description="Gnk2-homologous 2" evidence="2">
    <location>
        <begin position="160"/>
        <end position="267"/>
    </location>
</feature>
<proteinExistence type="inferred from homology"/>
<accession>Q9LRM0</accession>
<accession>F4IYW5</accession>
<reference key="1">
    <citation type="journal article" date="2000" name="DNA Res.">
        <title>Structural analysis of Arabidopsis thaliana chromosome 3. I. Sequence features of the regions of 4,504,864 bp covered by sixty P1 and TAC clones.</title>
        <authorList>
            <person name="Sato S."/>
            <person name="Nakamura Y."/>
            <person name="Kaneko T."/>
            <person name="Katoh T."/>
            <person name="Asamizu E."/>
            <person name="Tabata S."/>
        </authorList>
    </citation>
    <scope>NUCLEOTIDE SEQUENCE [LARGE SCALE GENOMIC DNA]</scope>
    <source>
        <strain>cv. Columbia</strain>
    </source>
</reference>
<reference key="2">
    <citation type="journal article" date="2017" name="Plant J.">
        <title>Araport11: a complete reannotation of the Arabidopsis thaliana reference genome.</title>
        <authorList>
            <person name="Cheng C.Y."/>
            <person name="Krishnakumar V."/>
            <person name="Chan A.P."/>
            <person name="Thibaud-Nissen F."/>
            <person name="Schobel S."/>
            <person name="Town C.D."/>
        </authorList>
    </citation>
    <scope>GENOME REANNOTATION</scope>
    <source>
        <strain>cv. Columbia</strain>
    </source>
</reference>
<reference key="3">
    <citation type="journal article" date="2001" name="Plant Physiol.">
        <title>A superfamily of proteins with novel cysteine-rich repeats.</title>
        <authorList>
            <person name="Chen Z."/>
        </authorList>
    </citation>
    <scope>GENE FAMILY ORGANIZATION</scope>
    <scope>NOMENCLATURE</scope>
</reference>
<keyword id="KW-1185">Reference proteome</keyword>
<keyword id="KW-0677">Repeat</keyword>
<keyword id="KW-0964">Secreted</keyword>
<keyword id="KW-0732">Signal</keyword>